<sequence length="227" mass="25018">MAIKDWHEDDRPREKLLKFGAAHLSDAEILAIFLRTGTQSQSAIELARHLIEQFGSLAELLAAPQETVLACHGIGPAKYAQILASLEMGRRYLDSQLKTGQGLGRSQMVKDYISTQLRGEPREVFAVLCLDNALNLINFEILFTGGISSCSVCIKHVLRHALSHAASQLIIAHNHPHTDAKPSTADNLLTYELKKACDLIDLSLIDHVIVGRNETLSYAENSLPPFN</sequence>
<protein>
    <recommendedName>
        <fullName>UPF0758 protein Pcryo_2119</fullName>
    </recommendedName>
</protein>
<name>Y2119_PSYCK</name>
<organism>
    <name type="scientific">Psychrobacter cryohalolentis (strain ATCC BAA-1226 / DSM 17306 / VKM B-2378 / K5)</name>
    <dbReference type="NCBI Taxonomy" id="335284"/>
    <lineage>
        <taxon>Bacteria</taxon>
        <taxon>Pseudomonadati</taxon>
        <taxon>Pseudomonadota</taxon>
        <taxon>Gammaproteobacteria</taxon>
        <taxon>Moraxellales</taxon>
        <taxon>Moraxellaceae</taxon>
        <taxon>Psychrobacter</taxon>
    </lineage>
</organism>
<comment type="similarity">
    <text evidence="2">Belongs to the UPF0758 family.</text>
</comment>
<keyword id="KW-0378">Hydrolase</keyword>
<keyword id="KW-0479">Metal-binding</keyword>
<keyword id="KW-0482">Metalloprotease</keyword>
<keyword id="KW-0645">Protease</keyword>
<keyword id="KW-0862">Zinc</keyword>
<reference key="1">
    <citation type="submission" date="2006-03" db="EMBL/GenBank/DDBJ databases">
        <title>Complete sequence of chromosome of Psychrobacter cryohalolentis K5.</title>
        <authorList>
            <consortium name="US DOE Joint Genome Institute"/>
            <person name="Copeland A."/>
            <person name="Lucas S."/>
            <person name="Lapidus A."/>
            <person name="Barry K."/>
            <person name="Detter J.C."/>
            <person name="Glavina T."/>
            <person name="Hammon N."/>
            <person name="Israni S."/>
            <person name="Dalin E."/>
            <person name="Tice H."/>
            <person name="Pitluck S."/>
            <person name="Brettin T."/>
            <person name="Bruce D."/>
            <person name="Han C."/>
            <person name="Tapia R."/>
            <person name="Sims D.R."/>
            <person name="Gilna P."/>
            <person name="Schmutz J."/>
            <person name="Larimer F."/>
            <person name="Land M."/>
            <person name="Hauser L."/>
            <person name="Kyrpides N."/>
            <person name="Kim E."/>
            <person name="Richardson P."/>
        </authorList>
    </citation>
    <scope>NUCLEOTIDE SEQUENCE [LARGE SCALE GENOMIC DNA]</scope>
    <source>
        <strain>ATCC BAA-1226 / DSM 17306 / VKM B-2378 / K5</strain>
    </source>
</reference>
<proteinExistence type="inferred from homology"/>
<evidence type="ECO:0000255" key="1">
    <source>
        <dbReference type="PROSITE-ProRule" id="PRU01182"/>
    </source>
</evidence>
<evidence type="ECO:0000305" key="2"/>
<accession>Q1Q8V7</accession>
<feature type="chain" id="PRO_0000322697" description="UPF0758 protein Pcryo_2119">
    <location>
        <begin position="1"/>
        <end position="227"/>
    </location>
</feature>
<feature type="domain" description="MPN" evidence="1">
    <location>
        <begin position="102"/>
        <end position="224"/>
    </location>
</feature>
<feature type="short sequence motif" description="JAMM motif" evidence="1">
    <location>
        <begin position="173"/>
        <end position="186"/>
    </location>
</feature>
<feature type="binding site" evidence="1">
    <location>
        <position position="173"/>
    </location>
    <ligand>
        <name>Zn(2+)</name>
        <dbReference type="ChEBI" id="CHEBI:29105"/>
        <note>catalytic</note>
    </ligand>
</feature>
<feature type="binding site" evidence="1">
    <location>
        <position position="175"/>
    </location>
    <ligand>
        <name>Zn(2+)</name>
        <dbReference type="ChEBI" id="CHEBI:29105"/>
        <note>catalytic</note>
    </ligand>
</feature>
<feature type="binding site" evidence="1">
    <location>
        <position position="186"/>
    </location>
    <ligand>
        <name>Zn(2+)</name>
        <dbReference type="ChEBI" id="CHEBI:29105"/>
        <note>catalytic</note>
    </ligand>
</feature>
<gene>
    <name type="ordered locus">Pcryo_2119</name>
</gene>
<dbReference type="EMBL" id="CP000323">
    <property type="protein sequence ID" value="ABE75896.1"/>
    <property type="molecule type" value="Genomic_DNA"/>
</dbReference>
<dbReference type="RefSeq" id="WP_011514434.1">
    <property type="nucleotide sequence ID" value="NC_007969.1"/>
</dbReference>
<dbReference type="SMR" id="Q1Q8V7"/>
<dbReference type="STRING" id="335284.Pcryo_2119"/>
<dbReference type="KEGG" id="pcr:Pcryo_2119"/>
<dbReference type="eggNOG" id="COG2003">
    <property type="taxonomic scope" value="Bacteria"/>
</dbReference>
<dbReference type="HOGENOM" id="CLU_073529_0_2_6"/>
<dbReference type="Proteomes" id="UP000002425">
    <property type="component" value="Chromosome"/>
</dbReference>
<dbReference type="GO" id="GO:0046872">
    <property type="term" value="F:metal ion binding"/>
    <property type="evidence" value="ECO:0007669"/>
    <property type="project" value="UniProtKB-KW"/>
</dbReference>
<dbReference type="GO" id="GO:0008237">
    <property type="term" value="F:metallopeptidase activity"/>
    <property type="evidence" value="ECO:0007669"/>
    <property type="project" value="UniProtKB-KW"/>
</dbReference>
<dbReference type="GO" id="GO:0006508">
    <property type="term" value="P:proteolysis"/>
    <property type="evidence" value="ECO:0007669"/>
    <property type="project" value="UniProtKB-KW"/>
</dbReference>
<dbReference type="CDD" id="cd08071">
    <property type="entry name" value="MPN_DUF2466"/>
    <property type="match status" value="1"/>
</dbReference>
<dbReference type="Gene3D" id="1.10.150.20">
    <property type="entry name" value="5' to 3' exonuclease, C-terminal subdomain"/>
    <property type="match status" value="1"/>
</dbReference>
<dbReference type="Gene3D" id="3.40.140.10">
    <property type="entry name" value="Cytidine Deaminase, domain 2"/>
    <property type="match status" value="1"/>
</dbReference>
<dbReference type="InterPro" id="IPR037518">
    <property type="entry name" value="MPN"/>
</dbReference>
<dbReference type="InterPro" id="IPR025657">
    <property type="entry name" value="RadC_JAB"/>
</dbReference>
<dbReference type="InterPro" id="IPR010994">
    <property type="entry name" value="RuvA_2-like"/>
</dbReference>
<dbReference type="InterPro" id="IPR001405">
    <property type="entry name" value="UPF0758"/>
</dbReference>
<dbReference type="InterPro" id="IPR046778">
    <property type="entry name" value="UPF0758_N"/>
</dbReference>
<dbReference type="NCBIfam" id="NF000642">
    <property type="entry name" value="PRK00024.1"/>
    <property type="match status" value="1"/>
</dbReference>
<dbReference type="NCBIfam" id="TIGR00608">
    <property type="entry name" value="radc"/>
    <property type="match status" value="1"/>
</dbReference>
<dbReference type="PANTHER" id="PTHR30471">
    <property type="entry name" value="DNA REPAIR PROTEIN RADC"/>
    <property type="match status" value="1"/>
</dbReference>
<dbReference type="PANTHER" id="PTHR30471:SF3">
    <property type="entry name" value="UPF0758 PROTEIN YEES-RELATED"/>
    <property type="match status" value="1"/>
</dbReference>
<dbReference type="Pfam" id="PF04002">
    <property type="entry name" value="RadC"/>
    <property type="match status" value="1"/>
</dbReference>
<dbReference type="Pfam" id="PF20582">
    <property type="entry name" value="UPF0758_N"/>
    <property type="match status" value="1"/>
</dbReference>
<dbReference type="SUPFAM" id="SSF102712">
    <property type="entry name" value="JAB1/MPN domain"/>
    <property type="match status" value="1"/>
</dbReference>
<dbReference type="SUPFAM" id="SSF47781">
    <property type="entry name" value="RuvA domain 2-like"/>
    <property type="match status" value="1"/>
</dbReference>
<dbReference type="PROSITE" id="PS50249">
    <property type="entry name" value="MPN"/>
    <property type="match status" value="1"/>
</dbReference>